<gene>
    <name evidence="1" type="primary">truA</name>
    <name type="ordered locus">Pars_0233</name>
</gene>
<keyword id="KW-0413">Isomerase</keyword>
<keyword id="KW-0819">tRNA processing</keyword>
<evidence type="ECO:0000255" key="1">
    <source>
        <dbReference type="HAMAP-Rule" id="MF_00171"/>
    </source>
</evidence>
<comment type="function">
    <text evidence="1">Formation of pseudouridine at positions 38, 39 and 40 in the anticodon stem and loop of transfer RNAs.</text>
</comment>
<comment type="catalytic activity">
    <reaction evidence="1">
        <text>uridine(38/39/40) in tRNA = pseudouridine(38/39/40) in tRNA</text>
        <dbReference type="Rhea" id="RHEA:22376"/>
        <dbReference type="Rhea" id="RHEA-COMP:10085"/>
        <dbReference type="Rhea" id="RHEA-COMP:10087"/>
        <dbReference type="ChEBI" id="CHEBI:65314"/>
        <dbReference type="ChEBI" id="CHEBI:65315"/>
        <dbReference type="EC" id="5.4.99.12"/>
    </reaction>
</comment>
<comment type="similarity">
    <text evidence="1">Belongs to the tRNA pseudouridine synthase TruA family.</text>
</comment>
<dbReference type="EC" id="5.4.99.12" evidence="1"/>
<dbReference type="EMBL" id="CP000660">
    <property type="protein sequence ID" value="ABP49848.1"/>
    <property type="molecule type" value="Genomic_DNA"/>
</dbReference>
<dbReference type="SMR" id="A4WHI1"/>
<dbReference type="STRING" id="340102.Pars_0233"/>
<dbReference type="KEGG" id="pas:Pars_0233"/>
<dbReference type="HOGENOM" id="CLU_014673_4_2_2"/>
<dbReference type="OrthoDB" id="25720at2157"/>
<dbReference type="PhylomeDB" id="A4WHI1"/>
<dbReference type="Proteomes" id="UP000001567">
    <property type="component" value="Chromosome"/>
</dbReference>
<dbReference type="GO" id="GO:0003723">
    <property type="term" value="F:RNA binding"/>
    <property type="evidence" value="ECO:0007669"/>
    <property type="project" value="InterPro"/>
</dbReference>
<dbReference type="GO" id="GO:0160147">
    <property type="term" value="F:tRNA pseudouridine(38-40) synthase activity"/>
    <property type="evidence" value="ECO:0007669"/>
    <property type="project" value="UniProtKB-EC"/>
</dbReference>
<dbReference type="GO" id="GO:0031119">
    <property type="term" value="P:tRNA pseudouridine synthesis"/>
    <property type="evidence" value="ECO:0007669"/>
    <property type="project" value="UniProtKB-UniRule"/>
</dbReference>
<dbReference type="Gene3D" id="3.30.70.660">
    <property type="entry name" value="Pseudouridine synthase I, catalytic domain, C-terminal subdomain"/>
    <property type="match status" value="1"/>
</dbReference>
<dbReference type="Gene3D" id="3.30.70.580">
    <property type="entry name" value="Pseudouridine synthase I, catalytic domain, N-terminal subdomain"/>
    <property type="match status" value="1"/>
</dbReference>
<dbReference type="HAMAP" id="MF_00171">
    <property type="entry name" value="TruA"/>
    <property type="match status" value="1"/>
</dbReference>
<dbReference type="InterPro" id="IPR020103">
    <property type="entry name" value="PsdUridine_synth_cat_dom_sf"/>
</dbReference>
<dbReference type="InterPro" id="IPR001406">
    <property type="entry name" value="PsdUridine_synth_TruA"/>
</dbReference>
<dbReference type="InterPro" id="IPR020097">
    <property type="entry name" value="PsdUridine_synth_TruA_a/b_dom"/>
</dbReference>
<dbReference type="InterPro" id="IPR020095">
    <property type="entry name" value="PsdUridine_synth_TruA_C"/>
</dbReference>
<dbReference type="InterPro" id="IPR020094">
    <property type="entry name" value="TruA/RsuA/RluB/E/F_N"/>
</dbReference>
<dbReference type="PANTHER" id="PTHR11142">
    <property type="entry name" value="PSEUDOURIDYLATE SYNTHASE"/>
    <property type="match status" value="1"/>
</dbReference>
<dbReference type="PANTHER" id="PTHR11142:SF0">
    <property type="entry name" value="TRNA PSEUDOURIDINE SYNTHASE-LIKE 1"/>
    <property type="match status" value="1"/>
</dbReference>
<dbReference type="Pfam" id="PF01416">
    <property type="entry name" value="PseudoU_synth_1"/>
    <property type="match status" value="1"/>
</dbReference>
<dbReference type="PIRSF" id="PIRSF001430">
    <property type="entry name" value="tRNA_psdUrid_synth"/>
    <property type="match status" value="1"/>
</dbReference>
<dbReference type="SUPFAM" id="SSF55120">
    <property type="entry name" value="Pseudouridine synthase"/>
    <property type="match status" value="1"/>
</dbReference>
<organism>
    <name type="scientific">Pyrobaculum arsenaticum (strain DSM 13514 / JCM 11321 / PZ6)</name>
    <dbReference type="NCBI Taxonomy" id="340102"/>
    <lineage>
        <taxon>Archaea</taxon>
        <taxon>Thermoproteota</taxon>
        <taxon>Thermoprotei</taxon>
        <taxon>Thermoproteales</taxon>
        <taxon>Thermoproteaceae</taxon>
        <taxon>Pyrobaculum</taxon>
    </lineage>
</organism>
<proteinExistence type="inferred from homology"/>
<feature type="chain" id="PRO_1000017144" description="tRNA pseudouridine synthase A">
    <location>
        <begin position="1"/>
        <end position="257"/>
    </location>
</feature>
<feature type="active site" description="Nucleophile" evidence="1">
    <location>
        <position position="43"/>
    </location>
</feature>
<feature type="binding site" evidence="1">
    <location>
        <position position="94"/>
    </location>
    <ligand>
        <name>substrate</name>
    </ligand>
</feature>
<protein>
    <recommendedName>
        <fullName evidence="1">tRNA pseudouridine synthase A</fullName>
        <ecNumber evidence="1">5.4.99.12</ecNumber>
    </recommendedName>
    <alternativeName>
        <fullName evidence="1">tRNA pseudouridine(38-40) synthase</fullName>
    </alternativeName>
    <alternativeName>
        <fullName evidence="1">tRNA pseudouridylate synthase I</fullName>
    </alternativeName>
    <alternativeName>
        <fullName evidence="1">tRNA-uridine isomerase I</fullName>
    </alternativeName>
</protein>
<sequence>MPYLYRIAYDGTLFYGFTGHPNSLEPKLRAALGEILGRGSRTDPGVSAVANVVMTSQRLHLGYVNSKLPRGVWAWGVAEVPEGFNPRRAKARRYLYVAPHWGEDVEAMREAAAVLVGTHDYSSFIKRRGDKATPTVTTVYKIEVEQRGGLIYMMFVGRGFRNKMIRKMAWAILATGRGVLKASDLRELVERPRPGAVPSAPAEGLVLLDIDYGIEFEVYHTALREAYTYFLRKYRAVEAHAAALKAAGEALARLDVV</sequence>
<name>TRUA_PYRAR</name>
<reference key="1">
    <citation type="submission" date="2007-04" db="EMBL/GenBank/DDBJ databases">
        <title>Complete sequence of Pyrobaculum arsenaticum DSM 13514.</title>
        <authorList>
            <consortium name="US DOE Joint Genome Institute"/>
            <person name="Copeland A."/>
            <person name="Lucas S."/>
            <person name="Lapidus A."/>
            <person name="Barry K."/>
            <person name="Glavina del Rio T."/>
            <person name="Dalin E."/>
            <person name="Tice H."/>
            <person name="Pitluck S."/>
            <person name="Chain P."/>
            <person name="Malfatti S."/>
            <person name="Shin M."/>
            <person name="Vergez L."/>
            <person name="Schmutz J."/>
            <person name="Larimer F."/>
            <person name="Land M."/>
            <person name="Hauser L."/>
            <person name="Kyrpides N."/>
            <person name="Mikhailova N."/>
            <person name="Cozen A.E."/>
            <person name="Fitz-Gibbon S.T."/>
            <person name="House C.H."/>
            <person name="Saltikov C."/>
            <person name="Lowe T.M."/>
            <person name="Richardson P."/>
        </authorList>
    </citation>
    <scope>NUCLEOTIDE SEQUENCE [LARGE SCALE GENOMIC DNA]</scope>
    <source>
        <strain>ATCC 700994 / DSM 13514 / JCM 11321 / PZ6</strain>
    </source>
</reference>
<accession>A4WHI1</accession>